<evidence type="ECO:0000255" key="1">
    <source>
        <dbReference type="HAMAP-Rule" id="MF_00010"/>
    </source>
</evidence>
<evidence type="ECO:0000305" key="2"/>
<name>Y1341_PSYCK</name>
<comment type="subcellular location">
    <subcellularLocation>
        <location evidence="1">Cell inner membrane</location>
        <topology evidence="1">Multi-pass membrane protein</topology>
    </subcellularLocation>
</comment>
<comment type="similarity">
    <text evidence="1">Belongs to the UPF0060 family.</text>
</comment>
<comment type="sequence caution" evidence="2">
    <conflict type="erroneous initiation">
        <sequence resource="EMBL-CDS" id="ABE75122"/>
    </conflict>
</comment>
<feature type="chain" id="PRO_0000282251" description="UPF0060 membrane protein Pcryo_1341">
    <location>
        <begin position="1"/>
        <end position="110"/>
    </location>
</feature>
<feature type="transmembrane region" description="Helical" evidence="1">
    <location>
        <begin position="7"/>
        <end position="27"/>
    </location>
</feature>
<feature type="transmembrane region" description="Helical" evidence="1">
    <location>
        <begin position="33"/>
        <end position="53"/>
    </location>
</feature>
<feature type="transmembrane region" description="Helical" evidence="1">
    <location>
        <begin position="63"/>
        <end position="83"/>
    </location>
</feature>
<feature type="transmembrane region" description="Helical" evidence="1">
    <location>
        <begin position="87"/>
        <end position="107"/>
    </location>
</feature>
<protein>
    <recommendedName>
        <fullName evidence="1">UPF0060 membrane protein Pcryo_1341</fullName>
    </recommendedName>
</protein>
<keyword id="KW-0997">Cell inner membrane</keyword>
<keyword id="KW-1003">Cell membrane</keyword>
<keyword id="KW-0472">Membrane</keyword>
<keyword id="KW-0812">Transmembrane</keyword>
<keyword id="KW-1133">Transmembrane helix</keyword>
<gene>
    <name type="ordered locus">Pcryo_1341</name>
</gene>
<proteinExistence type="inferred from homology"/>
<organism>
    <name type="scientific">Psychrobacter cryohalolentis (strain ATCC BAA-1226 / DSM 17306 / VKM B-2378 / K5)</name>
    <dbReference type="NCBI Taxonomy" id="335284"/>
    <lineage>
        <taxon>Bacteria</taxon>
        <taxon>Pseudomonadati</taxon>
        <taxon>Pseudomonadota</taxon>
        <taxon>Gammaproteobacteria</taxon>
        <taxon>Moraxellales</taxon>
        <taxon>Moraxellaceae</taxon>
        <taxon>Psychrobacter</taxon>
    </lineage>
</organism>
<accession>Q1QB31</accession>
<sequence length="110" mass="12071">MSELKTVGLFAITALAEIVGCYLPYLWLREGKSIWLLVPSALSLVAFVWLLTLHPTAVGRVYAAYGGVYVTMAILWLWAVDGIRPTTWDILGTSVALLGMAIIMFAPRNT</sequence>
<reference key="1">
    <citation type="submission" date="2006-03" db="EMBL/GenBank/DDBJ databases">
        <title>Complete sequence of chromosome of Psychrobacter cryohalolentis K5.</title>
        <authorList>
            <consortium name="US DOE Joint Genome Institute"/>
            <person name="Copeland A."/>
            <person name="Lucas S."/>
            <person name="Lapidus A."/>
            <person name="Barry K."/>
            <person name="Detter J.C."/>
            <person name="Glavina T."/>
            <person name="Hammon N."/>
            <person name="Israni S."/>
            <person name="Dalin E."/>
            <person name="Tice H."/>
            <person name="Pitluck S."/>
            <person name="Brettin T."/>
            <person name="Bruce D."/>
            <person name="Han C."/>
            <person name="Tapia R."/>
            <person name="Sims D.R."/>
            <person name="Gilna P."/>
            <person name="Schmutz J."/>
            <person name="Larimer F."/>
            <person name="Land M."/>
            <person name="Hauser L."/>
            <person name="Kyrpides N."/>
            <person name="Kim E."/>
            <person name="Richardson P."/>
        </authorList>
    </citation>
    <scope>NUCLEOTIDE SEQUENCE [LARGE SCALE GENOMIC DNA]</scope>
    <source>
        <strain>ATCC BAA-1226 / DSM 17306 / VKM B-2378 / K5</strain>
    </source>
</reference>
<dbReference type="EMBL" id="CP000323">
    <property type="protein sequence ID" value="ABE75122.1"/>
    <property type="status" value="ALT_INIT"/>
    <property type="molecule type" value="Genomic_DNA"/>
</dbReference>
<dbReference type="RefSeq" id="WP_015060935.1">
    <property type="nucleotide sequence ID" value="NC_007969.1"/>
</dbReference>
<dbReference type="SMR" id="Q1QB31"/>
<dbReference type="STRING" id="335284.Pcryo_1341"/>
<dbReference type="KEGG" id="pcr:Pcryo_1341"/>
<dbReference type="eggNOG" id="COG1742">
    <property type="taxonomic scope" value="Bacteria"/>
</dbReference>
<dbReference type="HOGENOM" id="CLU_117653_2_0_6"/>
<dbReference type="Proteomes" id="UP000002425">
    <property type="component" value="Chromosome"/>
</dbReference>
<dbReference type="GO" id="GO:0005886">
    <property type="term" value="C:plasma membrane"/>
    <property type="evidence" value="ECO:0007669"/>
    <property type="project" value="UniProtKB-SubCell"/>
</dbReference>
<dbReference type="HAMAP" id="MF_00010">
    <property type="entry name" value="UPF0060"/>
    <property type="match status" value="1"/>
</dbReference>
<dbReference type="InterPro" id="IPR003844">
    <property type="entry name" value="UPF0060"/>
</dbReference>
<dbReference type="NCBIfam" id="NF002586">
    <property type="entry name" value="PRK02237.1"/>
    <property type="match status" value="1"/>
</dbReference>
<dbReference type="PANTHER" id="PTHR36116">
    <property type="entry name" value="UPF0060 MEMBRANE PROTEIN YNFA"/>
    <property type="match status" value="1"/>
</dbReference>
<dbReference type="PANTHER" id="PTHR36116:SF1">
    <property type="entry name" value="UPF0060 MEMBRANE PROTEIN YNFA"/>
    <property type="match status" value="1"/>
</dbReference>
<dbReference type="Pfam" id="PF02694">
    <property type="entry name" value="UPF0060"/>
    <property type="match status" value="1"/>
</dbReference>
<dbReference type="SUPFAM" id="SSF103481">
    <property type="entry name" value="Multidrug resistance efflux transporter EmrE"/>
    <property type="match status" value="1"/>
</dbReference>